<protein>
    <recommendedName>
        <fullName>Alkyl hydroperoxide reductase C</fullName>
        <shortName>MtAhpC</shortName>
        <ecNumber>1.11.1.28</ecNumber>
    </recommendedName>
    <alternativeName>
        <fullName>Peroxiredoxin</fullName>
    </alternativeName>
    <alternativeName>
        <fullName>Thioredoxin peroxidase</fullName>
    </alternativeName>
</protein>
<dbReference type="EC" id="1.11.1.28"/>
<dbReference type="EMBL" id="AE000516">
    <property type="protein sequence ID" value="AAK46800.1"/>
    <property type="molecule type" value="Genomic_DNA"/>
</dbReference>
<dbReference type="RefSeq" id="WP_003412529.1">
    <property type="nucleotide sequence ID" value="NZ_KK341227.1"/>
</dbReference>
<dbReference type="SMR" id="P9WQB6"/>
<dbReference type="GeneID" id="45426418"/>
<dbReference type="KEGG" id="mtc:MT2503"/>
<dbReference type="PATRIC" id="fig|83331.31.peg.2698"/>
<dbReference type="HOGENOM" id="CLU_042529_21_3_11"/>
<dbReference type="Proteomes" id="UP000001020">
    <property type="component" value="Chromosome"/>
</dbReference>
<dbReference type="GO" id="GO:0005829">
    <property type="term" value="C:cytosol"/>
    <property type="evidence" value="ECO:0007669"/>
    <property type="project" value="TreeGrafter"/>
</dbReference>
<dbReference type="GO" id="GO:0008379">
    <property type="term" value="F:thioredoxin peroxidase activity"/>
    <property type="evidence" value="ECO:0007669"/>
    <property type="project" value="TreeGrafter"/>
</dbReference>
<dbReference type="GO" id="GO:0045454">
    <property type="term" value="P:cell redox homeostasis"/>
    <property type="evidence" value="ECO:0007669"/>
    <property type="project" value="TreeGrafter"/>
</dbReference>
<dbReference type="GO" id="GO:0033554">
    <property type="term" value="P:cellular response to stress"/>
    <property type="evidence" value="ECO:0007669"/>
    <property type="project" value="TreeGrafter"/>
</dbReference>
<dbReference type="GO" id="GO:0042744">
    <property type="term" value="P:hydrogen peroxide catabolic process"/>
    <property type="evidence" value="ECO:0007669"/>
    <property type="project" value="TreeGrafter"/>
</dbReference>
<dbReference type="GO" id="GO:0006979">
    <property type="term" value="P:response to oxidative stress"/>
    <property type="evidence" value="ECO:0007669"/>
    <property type="project" value="TreeGrafter"/>
</dbReference>
<dbReference type="CDD" id="cd03015">
    <property type="entry name" value="PRX_Typ2cys"/>
    <property type="match status" value="1"/>
</dbReference>
<dbReference type="FunFam" id="3.40.30.10:FF:000043">
    <property type="entry name" value="Alkyl hydroperoxide reductase C"/>
    <property type="match status" value="1"/>
</dbReference>
<dbReference type="Gene3D" id="3.40.30.10">
    <property type="entry name" value="Glutaredoxin"/>
    <property type="match status" value="1"/>
</dbReference>
<dbReference type="InterPro" id="IPR000866">
    <property type="entry name" value="AhpC/TSA"/>
</dbReference>
<dbReference type="InterPro" id="IPR050217">
    <property type="entry name" value="Peroxiredoxin"/>
</dbReference>
<dbReference type="InterPro" id="IPR024706">
    <property type="entry name" value="Peroxiredoxin_AhpC-typ"/>
</dbReference>
<dbReference type="InterPro" id="IPR036249">
    <property type="entry name" value="Thioredoxin-like_sf"/>
</dbReference>
<dbReference type="InterPro" id="IPR013766">
    <property type="entry name" value="Thioredoxin_domain"/>
</dbReference>
<dbReference type="PANTHER" id="PTHR10681:SF121">
    <property type="entry name" value="ALKYL HYDROPEROXIDE REDUCTASE C"/>
    <property type="match status" value="1"/>
</dbReference>
<dbReference type="PANTHER" id="PTHR10681">
    <property type="entry name" value="THIOREDOXIN PEROXIDASE"/>
    <property type="match status" value="1"/>
</dbReference>
<dbReference type="Pfam" id="PF00578">
    <property type="entry name" value="AhpC-TSA"/>
    <property type="match status" value="1"/>
</dbReference>
<dbReference type="PIRSF" id="PIRSF000239">
    <property type="entry name" value="AHPC"/>
    <property type="match status" value="1"/>
</dbReference>
<dbReference type="SUPFAM" id="SSF52833">
    <property type="entry name" value="Thioredoxin-like"/>
    <property type="match status" value="1"/>
</dbReference>
<dbReference type="PROSITE" id="PS51352">
    <property type="entry name" value="THIOREDOXIN_2"/>
    <property type="match status" value="1"/>
</dbReference>
<comment type="function">
    <text evidence="3">Thiol-specific peroxidase that catalyzes the reduction of hydrogen peroxide and organic hydroperoxides to water and alcohols, respectively. Plays a role in cell protection against oxidative stress by detoxifying peroxides. Together with AhpD, DlaT and Lpd, constitutes an NADH-dependent peroxidase active against hydrogen and alkyl peroxides as well as serving as a peroxynitrite reductase, thus protecting the bacterium against reactive nitrogen intermediates and oxidative stress generated by the host immune system. Does not however seem to play a role in detoxification of isoniazid.</text>
</comment>
<comment type="catalytic activity">
    <reaction evidence="3">
        <text>N(6)-[(R)-dihydrolipoyl]-L-lysyl-[lipoyl-carrier protein] + a hydroperoxide = N(6)-[(R)-lipoyl]-L-lysyl-[lipoyl-carrier protein] + an alcohol + H2O</text>
        <dbReference type="Rhea" id="RHEA:62636"/>
        <dbReference type="Rhea" id="RHEA-COMP:10502"/>
        <dbReference type="Rhea" id="RHEA-COMP:16355"/>
        <dbReference type="ChEBI" id="CHEBI:15377"/>
        <dbReference type="ChEBI" id="CHEBI:30879"/>
        <dbReference type="ChEBI" id="CHEBI:35924"/>
        <dbReference type="ChEBI" id="CHEBI:83099"/>
        <dbReference type="ChEBI" id="CHEBI:83100"/>
        <dbReference type="EC" id="1.11.1.28"/>
    </reaction>
</comment>
<comment type="subunit">
    <text evidence="3">Homodimer; disulfide-linked, upon oxidation. 6 homodimers assemble to form a ring-like dodecamer. Identified in a complex with AhpD, DlaT and Lpd.</text>
</comment>
<comment type="subcellular location">
    <subcellularLocation>
        <location evidence="2">Cytoplasm</location>
    </subcellularLocation>
</comment>
<comment type="miscellaneous">
    <text evidence="3">The active site is a conserved redox-active cysteine residue, the peroxidatic cysteine (C(P)), which makes the nucleophilic attack on the peroxide substrate. The peroxide oxidizes the C(P)-SH to cysteine sulfenic acid (C(P)-SOH), which then reacts with another cysteine residue, the resolving cysteine (C(R)), to form a disulfide bridge. The disulfide is subsequently reduced by an appropriate electron donor to complete the catalytic cycle. In this typical 2-Cys peroxiredoxin, C(R) is provided by the other dimeric subunit to form an intersubunit disulfide. The disulfide can subsequently be reduced through a mixed disulfide with the C-terminal cysteine of AhpD, resolved by its second cysteine or by thioredoxin (TrxC).</text>
</comment>
<comment type="similarity">
    <text evidence="5">Belongs to the peroxiredoxin family. AhpC/Prx1 subfamily.</text>
</comment>
<gene>
    <name type="primary">ahpC</name>
    <name type="ordered locus">MT2503</name>
</gene>
<feature type="initiator methionine" description="Removed" evidence="1">
    <location>
        <position position="1"/>
    </location>
</feature>
<feature type="chain" id="PRO_0000426804" description="Alkyl hydroperoxide reductase C">
    <location>
        <begin position="2"/>
        <end position="195"/>
    </location>
</feature>
<feature type="domain" description="Thioredoxin" evidence="4">
    <location>
        <begin position="4"/>
        <end position="170"/>
    </location>
</feature>
<feature type="active site" description="Cysteine sulfenic acid (-SOH) intermediate" evidence="3">
    <location>
        <position position="61"/>
    </location>
</feature>
<feature type="disulfide bond" description="Interchain (with C-133 in AhpD); transient" evidence="3">
    <location>
        <position position="61"/>
    </location>
</feature>
<feature type="disulfide bond" description="Interchain (with C-174); in linked form" evidence="3">
    <location>
        <position position="61"/>
    </location>
</feature>
<feature type="disulfide bond" description="Interchain (with C-61); in linked form" evidence="3">
    <location>
        <position position="174"/>
    </location>
</feature>
<reference key="1">
    <citation type="journal article" date="2002" name="J. Bacteriol.">
        <title>Whole-genome comparison of Mycobacterium tuberculosis clinical and laboratory strains.</title>
        <authorList>
            <person name="Fleischmann R.D."/>
            <person name="Alland D."/>
            <person name="Eisen J.A."/>
            <person name="Carpenter L."/>
            <person name="White O."/>
            <person name="Peterson J.D."/>
            <person name="DeBoy R.T."/>
            <person name="Dodson R.J."/>
            <person name="Gwinn M.L."/>
            <person name="Haft D.H."/>
            <person name="Hickey E.K."/>
            <person name="Kolonay J.F."/>
            <person name="Nelson W.C."/>
            <person name="Umayam L.A."/>
            <person name="Ermolaeva M.D."/>
            <person name="Salzberg S.L."/>
            <person name="Delcher A."/>
            <person name="Utterback T.R."/>
            <person name="Weidman J.F."/>
            <person name="Khouri H.M."/>
            <person name="Gill J."/>
            <person name="Mikula A."/>
            <person name="Bishai W."/>
            <person name="Jacobs W.R. Jr."/>
            <person name="Venter J.C."/>
            <person name="Fraser C.M."/>
        </authorList>
    </citation>
    <scope>NUCLEOTIDE SEQUENCE [LARGE SCALE GENOMIC DNA]</scope>
    <source>
        <strain>CDC 1551 / Oshkosh</strain>
    </source>
</reference>
<organism>
    <name type="scientific">Mycobacterium tuberculosis (strain CDC 1551 / Oshkosh)</name>
    <dbReference type="NCBI Taxonomy" id="83331"/>
    <lineage>
        <taxon>Bacteria</taxon>
        <taxon>Bacillati</taxon>
        <taxon>Actinomycetota</taxon>
        <taxon>Actinomycetes</taxon>
        <taxon>Mycobacteriales</taxon>
        <taxon>Mycobacteriaceae</taxon>
        <taxon>Mycobacterium</taxon>
        <taxon>Mycobacterium tuberculosis complex</taxon>
    </lineage>
</organism>
<keyword id="KW-0049">Antioxidant</keyword>
<keyword id="KW-0963">Cytoplasm</keyword>
<keyword id="KW-1015">Disulfide bond</keyword>
<keyword id="KW-0560">Oxidoreductase</keyword>
<keyword id="KW-0575">Peroxidase</keyword>
<keyword id="KW-0676">Redox-active center</keyword>
<keyword id="KW-1185">Reference proteome</keyword>
<keyword id="KW-0346">Stress response</keyword>
<proteinExistence type="inferred from homology"/>
<accession>P9WQB6</accession>
<accession>L0T9L3</accession>
<accession>Q79FE2</accession>
<accession>Q7BHK8</accession>
<accession>Q7D758</accession>
<evidence type="ECO:0000250" key="1"/>
<evidence type="ECO:0000250" key="2">
    <source>
        <dbReference type="UniProtKB" id="P0AE08"/>
    </source>
</evidence>
<evidence type="ECO:0000250" key="3">
    <source>
        <dbReference type="UniProtKB" id="P9WQB7"/>
    </source>
</evidence>
<evidence type="ECO:0000255" key="4">
    <source>
        <dbReference type="PROSITE-ProRule" id="PRU00691"/>
    </source>
</evidence>
<evidence type="ECO:0000305" key="5"/>
<name>AHPC_MYCTO</name>
<sequence>MPLLTIGDQFPAYQLTALIGGDLSKVDAKQPGDYFTTITSDEHPGKWRVVFFWPKDFTFVCPTEIAAFSKLNDEFEDRDAQILGVSIDSEFAHFQWRAQHNDLKTLPFPMLSDIKRELSQAAGVLNADGVADRVTFIVDPNNEIQFVSATAGSVGRNVDEVLRVLDALQSDELCACNWRKGDPTLDAGELLKASA</sequence>